<sequence length="359" mass="37447">MTMENKPAGQNGLTYAQAGVDIDAGNLMVEKIKPLVRSTRRPGADGEIGGFGGLFDLKAAGFKDPVLVAANDGVGTKLKIAIDADIHDTVGIDLVAMCVNDLVVQGAEPLFFLDYYATGKLSPDQGVAIVSGIAEGCRQAGCALIGGETAEMPGMYRDGDYDLAGFAVGAAERDRLLPRGDIAEGDIILGLASSGVHSNGFSLVRRIVELSGLGWKSQAPFQPGATLGEALLTPTRIYVKPLLAAIRACDGIKALAHITGGGFPDNIPRVLPKGLAAEIDLPAIAVPPVFSWLAKTGNVEPNEMLRTFNCGIGMIAVVNPAKVDEVIAALAAEGEKVVTLGRMTRREKDGVIYKGQLAL</sequence>
<feature type="chain" id="PRO_1000083451" description="Phosphoribosylformylglycinamidine cyclo-ligase">
    <location>
        <begin position="1"/>
        <end position="359"/>
    </location>
</feature>
<proteinExistence type="inferred from homology"/>
<keyword id="KW-0067">ATP-binding</keyword>
<keyword id="KW-0963">Cytoplasm</keyword>
<keyword id="KW-0436">Ligase</keyword>
<keyword id="KW-0547">Nucleotide-binding</keyword>
<keyword id="KW-0658">Purine biosynthesis</keyword>
<keyword id="KW-1185">Reference proteome</keyword>
<comment type="catalytic activity">
    <reaction evidence="1">
        <text>2-formamido-N(1)-(5-O-phospho-beta-D-ribosyl)acetamidine + ATP = 5-amino-1-(5-phospho-beta-D-ribosyl)imidazole + ADP + phosphate + H(+)</text>
        <dbReference type="Rhea" id="RHEA:23032"/>
        <dbReference type="ChEBI" id="CHEBI:15378"/>
        <dbReference type="ChEBI" id="CHEBI:30616"/>
        <dbReference type="ChEBI" id="CHEBI:43474"/>
        <dbReference type="ChEBI" id="CHEBI:137981"/>
        <dbReference type="ChEBI" id="CHEBI:147287"/>
        <dbReference type="ChEBI" id="CHEBI:456216"/>
        <dbReference type="EC" id="6.3.3.1"/>
    </reaction>
</comment>
<comment type="pathway">
    <text evidence="1">Purine metabolism; IMP biosynthesis via de novo pathway; 5-amino-1-(5-phospho-D-ribosyl)imidazole from N(2)-formyl-N(1)-(5-phospho-D-ribosyl)glycinamide: step 2/2.</text>
</comment>
<comment type="subcellular location">
    <subcellularLocation>
        <location evidence="1">Cytoplasm</location>
    </subcellularLocation>
</comment>
<comment type="similarity">
    <text evidence="1">Belongs to the AIR synthase family.</text>
</comment>
<organism>
    <name type="scientific">Brucella canis (strain ATCC 23365 / NCTC 10854 / RM-666)</name>
    <dbReference type="NCBI Taxonomy" id="483179"/>
    <lineage>
        <taxon>Bacteria</taxon>
        <taxon>Pseudomonadati</taxon>
        <taxon>Pseudomonadota</taxon>
        <taxon>Alphaproteobacteria</taxon>
        <taxon>Hyphomicrobiales</taxon>
        <taxon>Brucellaceae</taxon>
        <taxon>Brucella/Ochrobactrum group</taxon>
        <taxon>Brucella</taxon>
    </lineage>
</organism>
<accession>A9MA84</accession>
<protein>
    <recommendedName>
        <fullName evidence="1">Phosphoribosylformylglycinamidine cyclo-ligase</fullName>
        <ecNumber evidence="1">6.3.3.1</ecNumber>
    </recommendedName>
    <alternativeName>
        <fullName evidence="1">AIR synthase</fullName>
    </alternativeName>
    <alternativeName>
        <fullName evidence="1">AIRS</fullName>
    </alternativeName>
    <alternativeName>
        <fullName evidence="1">Phosphoribosyl-aminoimidazole synthetase</fullName>
    </alternativeName>
</protein>
<evidence type="ECO:0000255" key="1">
    <source>
        <dbReference type="HAMAP-Rule" id="MF_00741"/>
    </source>
</evidence>
<dbReference type="EC" id="6.3.3.1" evidence="1"/>
<dbReference type="EMBL" id="CP000872">
    <property type="protein sequence ID" value="ABX61796.1"/>
    <property type="molecule type" value="Genomic_DNA"/>
</dbReference>
<dbReference type="RefSeq" id="WP_002963853.1">
    <property type="nucleotide sequence ID" value="NC_010103.1"/>
</dbReference>
<dbReference type="SMR" id="A9MA84"/>
<dbReference type="GeneID" id="93016888"/>
<dbReference type="KEGG" id="bcs:BCAN_A0723"/>
<dbReference type="HOGENOM" id="CLU_047116_0_0_5"/>
<dbReference type="PhylomeDB" id="A9MA84"/>
<dbReference type="UniPathway" id="UPA00074">
    <property type="reaction ID" value="UER00129"/>
</dbReference>
<dbReference type="PRO" id="PR:A9MA84"/>
<dbReference type="Proteomes" id="UP000001385">
    <property type="component" value="Chromosome I"/>
</dbReference>
<dbReference type="GO" id="GO:0005829">
    <property type="term" value="C:cytosol"/>
    <property type="evidence" value="ECO:0007669"/>
    <property type="project" value="TreeGrafter"/>
</dbReference>
<dbReference type="GO" id="GO:0005524">
    <property type="term" value="F:ATP binding"/>
    <property type="evidence" value="ECO:0007669"/>
    <property type="project" value="UniProtKB-KW"/>
</dbReference>
<dbReference type="GO" id="GO:0004637">
    <property type="term" value="F:phosphoribosylamine-glycine ligase activity"/>
    <property type="evidence" value="ECO:0007669"/>
    <property type="project" value="TreeGrafter"/>
</dbReference>
<dbReference type="GO" id="GO:0004641">
    <property type="term" value="F:phosphoribosylformylglycinamidine cyclo-ligase activity"/>
    <property type="evidence" value="ECO:0007669"/>
    <property type="project" value="UniProtKB-UniRule"/>
</dbReference>
<dbReference type="GO" id="GO:0006189">
    <property type="term" value="P:'de novo' IMP biosynthetic process"/>
    <property type="evidence" value="ECO:0007669"/>
    <property type="project" value="UniProtKB-UniRule"/>
</dbReference>
<dbReference type="GO" id="GO:0046084">
    <property type="term" value="P:adenine biosynthetic process"/>
    <property type="evidence" value="ECO:0007669"/>
    <property type="project" value="TreeGrafter"/>
</dbReference>
<dbReference type="CDD" id="cd02196">
    <property type="entry name" value="PurM"/>
    <property type="match status" value="1"/>
</dbReference>
<dbReference type="FunFam" id="3.30.1330.10:FF:000001">
    <property type="entry name" value="Phosphoribosylformylglycinamidine cyclo-ligase"/>
    <property type="match status" value="1"/>
</dbReference>
<dbReference type="FunFam" id="3.90.650.10:FF:000019">
    <property type="entry name" value="Trifunctional purine biosynthetic protein adenosine-3"/>
    <property type="match status" value="1"/>
</dbReference>
<dbReference type="Gene3D" id="3.90.650.10">
    <property type="entry name" value="PurM-like C-terminal domain"/>
    <property type="match status" value="1"/>
</dbReference>
<dbReference type="Gene3D" id="3.30.1330.10">
    <property type="entry name" value="PurM-like, N-terminal domain"/>
    <property type="match status" value="1"/>
</dbReference>
<dbReference type="HAMAP" id="MF_00741">
    <property type="entry name" value="AIRS"/>
    <property type="match status" value="1"/>
</dbReference>
<dbReference type="InterPro" id="IPR010918">
    <property type="entry name" value="PurM-like_C_dom"/>
</dbReference>
<dbReference type="InterPro" id="IPR036676">
    <property type="entry name" value="PurM-like_C_sf"/>
</dbReference>
<dbReference type="InterPro" id="IPR016188">
    <property type="entry name" value="PurM-like_N"/>
</dbReference>
<dbReference type="InterPro" id="IPR036921">
    <property type="entry name" value="PurM-like_N_sf"/>
</dbReference>
<dbReference type="InterPro" id="IPR004733">
    <property type="entry name" value="PurM_cligase"/>
</dbReference>
<dbReference type="NCBIfam" id="TIGR00878">
    <property type="entry name" value="purM"/>
    <property type="match status" value="1"/>
</dbReference>
<dbReference type="PANTHER" id="PTHR10520:SF12">
    <property type="entry name" value="TRIFUNCTIONAL PURINE BIOSYNTHETIC PROTEIN ADENOSINE-3"/>
    <property type="match status" value="1"/>
</dbReference>
<dbReference type="PANTHER" id="PTHR10520">
    <property type="entry name" value="TRIFUNCTIONAL PURINE BIOSYNTHETIC PROTEIN ADENOSINE-3-RELATED"/>
    <property type="match status" value="1"/>
</dbReference>
<dbReference type="Pfam" id="PF00586">
    <property type="entry name" value="AIRS"/>
    <property type="match status" value="1"/>
</dbReference>
<dbReference type="Pfam" id="PF02769">
    <property type="entry name" value="AIRS_C"/>
    <property type="match status" value="1"/>
</dbReference>
<dbReference type="SUPFAM" id="SSF56042">
    <property type="entry name" value="PurM C-terminal domain-like"/>
    <property type="match status" value="1"/>
</dbReference>
<dbReference type="SUPFAM" id="SSF55326">
    <property type="entry name" value="PurM N-terminal domain-like"/>
    <property type="match status" value="1"/>
</dbReference>
<gene>
    <name evidence="1" type="primary">purM</name>
    <name type="ordered locus">BCAN_A0723</name>
</gene>
<reference key="1">
    <citation type="submission" date="2007-10" db="EMBL/GenBank/DDBJ databases">
        <title>Brucella canis ATCC 23365 whole genome shotgun sequencing project.</title>
        <authorList>
            <person name="Setubal J.C."/>
            <person name="Bowns C."/>
            <person name="Boyle S."/>
            <person name="Crasta O.R."/>
            <person name="Czar M.J."/>
            <person name="Dharmanolla C."/>
            <person name="Gillespie J.J."/>
            <person name="Kenyon R.W."/>
            <person name="Lu J."/>
            <person name="Mane S."/>
            <person name="Mohapatra S."/>
            <person name="Nagrani S."/>
            <person name="Purkayastha A."/>
            <person name="Rajasimha H.K."/>
            <person name="Shallom J.M."/>
            <person name="Shallom S."/>
            <person name="Shukla M."/>
            <person name="Snyder E.E."/>
            <person name="Sobral B.W."/>
            <person name="Wattam A.R."/>
            <person name="Will R."/>
            <person name="Williams K."/>
            <person name="Yoo H."/>
            <person name="Bruce D."/>
            <person name="Detter C."/>
            <person name="Munk C."/>
            <person name="Brettin T.S."/>
        </authorList>
    </citation>
    <scope>NUCLEOTIDE SEQUENCE [LARGE SCALE GENOMIC DNA]</scope>
    <source>
        <strain>ATCC 23365 / NCTC 10854 / RM-666</strain>
    </source>
</reference>
<name>PUR5_BRUC2</name>